<proteinExistence type="evidence at protein level"/>
<evidence type="ECO:0000269" key="1">
    <source>
    </source>
</evidence>
<evidence type="ECO:0000269" key="2">
    <source>
    </source>
</evidence>
<evidence type="ECO:0000269" key="3">
    <source>
    </source>
</evidence>
<evidence type="ECO:0000303" key="4">
    <source>
    </source>
</evidence>
<evidence type="ECO:0000312" key="5">
    <source>
        <dbReference type="PDB" id="1CIX"/>
    </source>
</evidence>
<evidence type="ECO:0007829" key="6">
    <source>
        <dbReference type="PDB" id="1CIX"/>
    </source>
</evidence>
<name>TACA2_TACTR</name>
<feature type="signal peptide" evidence="1">
    <location>
        <begin position="1"/>
        <end position="23"/>
    </location>
</feature>
<feature type="peptide" id="PRO_0000256690" description="Tachystatin-A2" evidence="1">
    <location>
        <begin position="24"/>
        <end position="67"/>
    </location>
</feature>
<feature type="site" description="May be important for binding to chitin">
    <location>
        <position position="32"/>
    </location>
</feature>
<feature type="disulfide bond" evidence="2 5">
    <location>
        <begin position="27"/>
        <end position="47"/>
    </location>
</feature>
<feature type="disulfide bond" evidence="2 5">
    <location>
        <begin position="34"/>
        <end position="52"/>
    </location>
</feature>
<feature type="disulfide bond" evidence="2 5">
    <location>
        <begin position="46"/>
        <end position="64"/>
    </location>
</feature>
<feature type="strand" evidence="6">
    <location>
        <begin position="32"/>
        <end position="34"/>
    </location>
</feature>
<feature type="strand" evidence="6">
    <location>
        <begin position="51"/>
        <end position="56"/>
    </location>
</feature>
<feature type="strand" evidence="6">
    <location>
        <begin position="62"/>
        <end position="65"/>
    </location>
</feature>
<organism>
    <name type="scientific">Tachypleus tridentatus</name>
    <name type="common">Japanese horseshoe crab</name>
    <dbReference type="NCBI Taxonomy" id="6853"/>
    <lineage>
        <taxon>Eukaryota</taxon>
        <taxon>Metazoa</taxon>
        <taxon>Ecdysozoa</taxon>
        <taxon>Arthropoda</taxon>
        <taxon>Chelicerata</taxon>
        <taxon>Merostomata</taxon>
        <taxon>Xiphosura</taxon>
        <taxon>Limulidae</taxon>
        <taxon>Tachypleus</taxon>
    </lineage>
</organism>
<keyword id="KW-0002">3D-structure</keyword>
<keyword id="KW-0044">Antibiotic</keyword>
<keyword id="KW-0929">Antimicrobial</keyword>
<keyword id="KW-0903">Direct protein sequencing</keyword>
<keyword id="KW-1015">Disulfide bond</keyword>
<keyword id="KW-0295">Fungicide</keyword>
<keyword id="KW-0872">Ion channel impairing toxin</keyword>
<keyword id="KW-0960">Knottin</keyword>
<keyword id="KW-0632">Potassium channel impairing toxin</keyword>
<keyword id="KW-0964">Secreted</keyword>
<keyword id="KW-0732">Signal</keyword>
<keyword id="KW-0800">Toxin</keyword>
<keyword id="KW-1220">Voltage-gated potassium channel impairing toxin</keyword>
<accession>Q9U8X3</accession>
<protein>
    <recommendedName>
        <fullName evidence="4">Tachystatin-A2</fullName>
    </recommendedName>
</protein>
<sequence length="67" mass="7511">MKLQNTLILIGCLFLMGAMIGDAYSRCQLQGFNCVVRSYGLPTIPCCRGLTCRSYFPGSTYGRCQRY</sequence>
<comment type="function">
    <text evidence="1 3">Exhibits stronger antimicrobial activity against the Gram-positive bacteria (S.aureus (IC(50)=4.2 ug/ml)) and fungi (C.albicans (IC(50)=3.0 ug/ml) and P.pastoris (IC(50)=0.5 ug/ml)) than Gram-negative bacteria (E.coli (IC(50)=25 ug/ml)) (PubMed:10473569). Binds to chitin (8.4 uM are required to obtain 50% of binding) (PubMed:10473569). Does not cause hemolysis on sheep erythrocytes (PubMed:10473569). Has no blocking activity on the P-type calcium channel (PubMed:10473569). Has also been shown to weakly inhibit Kv1.2/KCNA2 voltage-gated potassium channels and TRPV1 receptors (PubMed:29483648).</text>
</comment>
<comment type="subcellular location">
    <subcellularLocation>
        <location>Secreted</location>
    </subcellularLocation>
</comment>
<comment type="tissue specificity">
    <text evidence="1">Granular hemocytes, small secretory granules.</text>
</comment>
<comment type="domain">
    <text evidence="2">The presence of a 'disulfide through disulfide knot' structurally defines this protein as a knottin.</text>
</comment>
<comment type="mass spectrometry" mass="5055.5" method="Electrospray" evidence="1"/>
<reference key="1">
    <citation type="journal article" date="1999" name="J. Biol. Chem.">
        <title>Horseshoe crab hemocyte-derived antimicrobial polypeptides, tachystatins, with sequence similarity to spider neurotoxins.</title>
        <authorList>
            <person name="Osaki T."/>
            <person name="Omotezako M."/>
            <person name="Nagayama R."/>
            <person name="Hirata M."/>
            <person name="Iwanaga S."/>
            <person name="Kasahara J."/>
            <person name="Hattori J."/>
            <person name="Ito I."/>
            <person name="Sugiyama H."/>
            <person name="Kawabata S."/>
        </authorList>
    </citation>
    <scope>NUCLEOTIDE SEQUENCE [MRNA]</scope>
    <scope>PROTEIN SEQUENCE OF 24-67</scope>
    <scope>FUNCTION</scope>
    <scope>MASS SPECTROMETRY</scope>
    <scope>TISSUE SPECIFICITY</scope>
    <source>
        <tissue>Hemocyte</tissue>
    </source>
</reference>
<reference key="2">
    <citation type="journal article" date="2018" name="Nat. Struct. Mol. Biol.">
        <title>Screening, large-scale production and structure-based classification of cystine-dense peptides.</title>
        <authorList>
            <person name="Correnti C.E."/>
            <person name="Gewe M.M."/>
            <person name="Mehlin C."/>
            <person name="Bandaranayake A.D."/>
            <person name="Johnsen W.A."/>
            <person name="Rupert P.B."/>
            <person name="Brusniak M.Y."/>
            <person name="Clarke M."/>
            <person name="Burke S.E."/>
            <person name="De Van Der Schueren W."/>
            <person name="Pilat K."/>
            <person name="Turnbaugh S.M."/>
            <person name="May D."/>
            <person name="Watson A."/>
            <person name="Chan M.K."/>
            <person name="Bahl C.D."/>
            <person name="Olson J.M."/>
            <person name="Strong R.K."/>
        </authorList>
    </citation>
    <scope>FUNCTION</scope>
    <scope>SYNTHESIS OF 24-67</scope>
</reference>
<reference key="3">
    <citation type="journal article" date="2002" name="J. Biol. Chem.">
        <title>Structure of the antimicrobial peptide tachystatin A.</title>
        <authorList>
            <person name="Fujitani N."/>
            <person name="Kawabata S."/>
            <person name="Osaki T."/>
            <person name="Kumaki Y."/>
            <person name="Demura M."/>
            <person name="Nitta K."/>
            <person name="Kawano K."/>
        </authorList>
    </citation>
    <scope>STRUCTURE BY NMR OF 24-67</scope>
    <scope>DISULFIDE BONDS</scope>
</reference>
<dbReference type="EMBL" id="AB023783">
    <property type="protein sequence ID" value="BAA85250.1"/>
    <property type="molecule type" value="mRNA"/>
</dbReference>
<dbReference type="PDB" id="1CIX">
    <property type="method" value="NMR"/>
    <property type="chains" value="A=24-67"/>
</dbReference>
<dbReference type="PDBsum" id="1CIX"/>
<dbReference type="SMR" id="Q9U8X3"/>
<dbReference type="EvolutionaryTrace" id="Q9U8X3"/>
<dbReference type="GO" id="GO:0005576">
    <property type="term" value="C:extracellular region"/>
    <property type="evidence" value="ECO:0007669"/>
    <property type="project" value="UniProtKB-SubCell"/>
</dbReference>
<dbReference type="GO" id="GO:0015459">
    <property type="term" value="F:potassium channel regulator activity"/>
    <property type="evidence" value="ECO:0007669"/>
    <property type="project" value="UniProtKB-KW"/>
</dbReference>
<dbReference type="GO" id="GO:0090729">
    <property type="term" value="F:toxin activity"/>
    <property type="evidence" value="ECO:0007669"/>
    <property type="project" value="UniProtKB-KW"/>
</dbReference>
<dbReference type="GO" id="GO:0042742">
    <property type="term" value="P:defense response to bacterium"/>
    <property type="evidence" value="ECO:0007669"/>
    <property type="project" value="UniProtKB-KW"/>
</dbReference>
<dbReference type="GO" id="GO:0050832">
    <property type="term" value="P:defense response to fungus"/>
    <property type="evidence" value="ECO:0007669"/>
    <property type="project" value="UniProtKB-KW"/>
</dbReference>
<dbReference type="GO" id="GO:0031640">
    <property type="term" value="P:killing of cells of another organism"/>
    <property type="evidence" value="ECO:0007669"/>
    <property type="project" value="UniProtKB-KW"/>
</dbReference>
<dbReference type="Gene3D" id="4.10.40.20">
    <property type="match status" value="1"/>
</dbReference>
<dbReference type="InterPro" id="IPR022717">
    <property type="entry name" value="Antimicrobial_tachystatin_A"/>
</dbReference>
<dbReference type="Pfam" id="PF11406">
    <property type="entry name" value="Tachystatin_A"/>
    <property type="match status" value="1"/>
</dbReference>
<dbReference type="SUPFAM" id="SSF57059">
    <property type="entry name" value="omega toxin-like"/>
    <property type="match status" value="1"/>
</dbReference>